<comment type="function">
    <text evidence="1">Catalyzes the irreversible NADPH-dependent deamination of GMP to IMP. It functions in the conversion of nucleobase, nucleoside and nucleotide derivatives of G to A nucleotides, and in maintaining the intracellular balance of A and G nucleotides.</text>
</comment>
<comment type="catalytic activity">
    <reaction evidence="1">
        <text>IMP + NH4(+) + NADP(+) = GMP + NADPH + 2 H(+)</text>
        <dbReference type="Rhea" id="RHEA:17185"/>
        <dbReference type="ChEBI" id="CHEBI:15378"/>
        <dbReference type="ChEBI" id="CHEBI:28938"/>
        <dbReference type="ChEBI" id="CHEBI:57783"/>
        <dbReference type="ChEBI" id="CHEBI:58053"/>
        <dbReference type="ChEBI" id="CHEBI:58115"/>
        <dbReference type="ChEBI" id="CHEBI:58349"/>
        <dbReference type="EC" id="1.7.1.7"/>
    </reaction>
</comment>
<comment type="similarity">
    <text evidence="1">Belongs to the IMPDH/GMPR family. GuaC type 2 subfamily.</text>
</comment>
<sequence>MKIFDYEDIQLIPNKCIVESRSECDTTIQFGPKKFKLPVVPANMQTVMNEKLAKWFAENDYFYIMHRFDEEARIPFIKHMQNSGLFASISVGVKKAEFDFIEKLAQEKLIPEYITIDIAHGHSDSVINMIKHIKNHIPDSFVIAGNVGTPEGVRELENAGADATKVGIGPGRVCITKIKTGFGTGGWQLAALNICSKAARKPLIADGGIRTHGDIAKSIRFGASMVMIGSLFAAHEESPGETVELDGKQYKEYFGSASEFQKGEHKNVEGKKMFVEHKGSLMDTLKEMQQDLQSSISYAGGKDLKSLRTVDYVIVRNSIFNGDRD</sequence>
<dbReference type="EC" id="1.7.1.7" evidence="1"/>
<dbReference type="EMBL" id="CP000736">
    <property type="protein sequence ID" value="ABR52275.1"/>
    <property type="molecule type" value="Genomic_DNA"/>
</dbReference>
<dbReference type="SMR" id="A6U1F7"/>
<dbReference type="KEGG" id="sah:SaurJH1_1425"/>
<dbReference type="HOGENOM" id="CLU_022552_5_0_9"/>
<dbReference type="GO" id="GO:0005829">
    <property type="term" value="C:cytosol"/>
    <property type="evidence" value="ECO:0007669"/>
    <property type="project" value="TreeGrafter"/>
</dbReference>
<dbReference type="GO" id="GO:1902560">
    <property type="term" value="C:GMP reductase complex"/>
    <property type="evidence" value="ECO:0007669"/>
    <property type="project" value="InterPro"/>
</dbReference>
<dbReference type="GO" id="GO:0003920">
    <property type="term" value="F:GMP reductase activity"/>
    <property type="evidence" value="ECO:0007669"/>
    <property type="project" value="UniProtKB-UniRule"/>
</dbReference>
<dbReference type="GO" id="GO:0006163">
    <property type="term" value="P:purine nucleotide metabolic process"/>
    <property type="evidence" value="ECO:0007669"/>
    <property type="project" value="UniProtKB-UniRule"/>
</dbReference>
<dbReference type="CDD" id="cd00381">
    <property type="entry name" value="IMPDH"/>
    <property type="match status" value="1"/>
</dbReference>
<dbReference type="FunFam" id="3.20.20.70:FF:000079">
    <property type="entry name" value="GMP reductase"/>
    <property type="match status" value="1"/>
</dbReference>
<dbReference type="Gene3D" id="3.20.20.70">
    <property type="entry name" value="Aldolase class I"/>
    <property type="match status" value="1"/>
</dbReference>
<dbReference type="HAMAP" id="MF_01511">
    <property type="entry name" value="GMP_reduct_type2"/>
    <property type="match status" value="1"/>
</dbReference>
<dbReference type="InterPro" id="IPR013785">
    <property type="entry name" value="Aldolase_TIM"/>
</dbReference>
<dbReference type="InterPro" id="IPR050139">
    <property type="entry name" value="GMP_reductase"/>
</dbReference>
<dbReference type="InterPro" id="IPR005994">
    <property type="entry name" value="GuaC_type_2"/>
</dbReference>
<dbReference type="InterPro" id="IPR015875">
    <property type="entry name" value="IMP_DH/GMP_Rdtase_CS"/>
</dbReference>
<dbReference type="InterPro" id="IPR001093">
    <property type="entry name" value="IMP_DH_GMPRt"/>
</dbReference>
<dbReference type="NCBIfam" id="TIGR01306">
    <property type="entry name" value="GMP_reduct_2"/>
    <property type="match status" value="1"/>
</dbReference>
<dbReference type="NCBIfam" id="NF003966">
    <property type="entry name" value="PRK05458.1"/>
    <property type="match status" value="1"/>
</dbReference>
<dbReference type="PANTHER" id="PTHR43170">
    <property type="entry name" value="GMP REDUCTASE"/>
    <property type="match status" value="1"/>
</dbReference>
<dbReference type="PANTHER" id="PTHR43170:SF5">
    <property type="entry name" value="GMP REDUCTASE"/>
    <property type="match status" value="1"/>
</dbReference>
<dbReference type="Pfam" id="PF00478">
    <property type="entry name" value="IMPDH"/>
    <property type="match status" value="1"/>
</dbReference>
<dbReference type="PIRSF" id="PIRSF036500">
    <property type="entry name" value="GMP_red_Firmic"/>
    <property type="match status" value="1"/>
</dbReference>
<dbReference type="SMART" id="SM01240">
    <property type="entry name" value="IMPDH"/>
    <property type="match status" value="1"/>
</dbReference>
<dbReference type="SUPFAM" id="SSF51412">
    <property type="entry name" value="Inosine monophosphate dehydrogenase (IMPDH)"/>
    <property type="match status" value="1"/>
</dbReference>
<dbReference type="PROSITE" id="PS00487">
    <property type="entry name" value="IMP_DH_GMP_RED"/>
    <property type="match status" value="1"/>
</dbReference>
<proteinExistence type="inferred from homology"/>
<evidence type="ECO:0000255" key="1">
    <source>
        <dbReference type="HAMAP-Rule" id="MF_01511"/>
    </source>
</evidence>
<organism>
    <name type="scientific">Staphylococcus aureus (strain JH1)</name>
    <dbReference type="NCBI Taxonomy" id="359787"/>
    <lineage>
        <taxon>Bacteria</taxon>
        <taxon>Bacillati</taxon>
        <taxon>Bacillota</taxon>
        <taxon>Bacilli</taxon>
        <taxon>Bacillales</taxon>
        <taxon>Staphylococcaceae</taxon>
        <taxon>Staphylococcus</taxon>
    </lineage>
</organism>
<reference key="1">
    <citation type="submission" date="2007-06" db="EMBL/GenBank/DDBJ databases">
        <title>Complete sequence of chromosome of Staphylococcus aureus subsp. aureus JH1.</title>
        <authorList>
            <consortium name="US DOE Joint Genome Institute"/>
            <person name="Copeland A."/>
            <person name="Lucas S."/>
            <person name="Lapidus A."/>
            <person name="Barry K."/>
            <person name="Detter J.C."/>
            <person name="Glavina del Rio T."/>
            <person name="Hammon N."/>
            <person name="Israni S."/>
            <person name="Dalin E."/>
            <person name="Tice H."/>
            <person name="Pitluck S."/>
            <person name="Chain P."/>
            <person name="Malfatti S."/>
            <person name="Shin M."/>
            <person name="Vergez L."/>
            <person name="Schmutz J."/>
            <person name="Larimer F."/>
            <person name="Land M."/>
            <person name="Hauser L."/>
            <person name="Kyrpides N."/>
            <person name="Ivanova N."/>
            <person name="Tomasz A."/>
            <person name="Richardson P."/>
        </authorList>
    </citation>
    <scope>NUCLEOTIDE SEQUENCE [LARGE SCALE GENOMIC DNA]</scope>
    <source>
        <strain>JH1</strain>
    </source>
</reference>
<name>GUAC_STAA2</name>
<feature type="chain" id="PRO_1000087524" description="GMP reductase">
    <location>
        <begin position="1"/>
        <end position="325"/>
    </location>
</feature>
<feature type="active site" description="Thioimidate intermediate" evidence="1">
    <location>
        <position position="174"/>
    </location>
</feature>
<feature type="binding site" evidence="1">
    <location>
        <begin position="203"/>
        <end position="226"/>
    </location>
    <ligand>
        <name>NADP(+)</name>
        <dbReference type="ChEBI" id="CHEBI:58349"/>
    </ligand>
</feature>
<keyword id="KW-0521">NADP</keyword>
<keyword id="KW-0560">Oxidoreductase</keyword>
<accession>A6U1F7</accession>
<gene>
    <name evidence="1" type="primary">guaC</name>
    <name type="ordered locus">SaurJH1_1425</name>
</gene>
<protein>
    <recommendedName>
        <fullName evidence="1">GMP reductase</fullName>
        <ecNumber evidence="1">1.7.1.7</ecNumber>
    </recommendedName>
    <alternativeName>
        <fullName evidence="1">Guanosine 5'-monophosphate oxidoreductase</fullName>
        <shortName evidence="1">Guanosine monophosphate reductase</shortName>
    </alternativeName>
</protein>